<accession>P43087</accession>
<accession>Q31M97</accession>
<keyword id="KW-0350">Heme biosynthesis</keyword>
<keyword id="KW-0456">Lyase</keyword>
<keyword id="KW-0460">Magnesium</keyword>
<keyword id="KW-0479">Metal-binding</keyword>
<keyword id="KW-0627">Porphyrin biosynthesis</keyword>
<keyword id="KW-1185">Reference proteome</keyword>
<keyword id="KW-0862">Zinc</keyword>
<evidence type="ECO:0000250" key="1"/>
<evidence type="ECO:0000305" key="2"/>
<reference key="1">
    <citation type="journal article" date="1994" name="Plant Mol. Biol.">
        <title>Cloning and characterisation of genes for tetrapyrrole biosynthesis from the cyanobacterium Anacystis nidulans R2.</title>
        <authorList>
            <person name="Jones M.C."/>
            <person name="Jenkins J.M."/>
            <person name="Smith A.G."/>
            <person name="Howe C.J."/>
        </authorList>
    </citation>
    <scope>NUCLEOTIDE SEQUENCE [GENOMIC DNA]</scope>
</reference>
<reference key="2">
    <citation type="submission" date="2005-08" db="EMBL/GenBank/DDBJ databases">
        <title>Complete sequence of chromosome 1 of Synechococcus elongatus PCC 7942.</title>
        <authorList>
            <consortium name="US DOE Joint Genome Institute"/>
            <person name="Copeland A."/>
            <person name="Lucas S."/>
            <person name="Lapidus A."/>
            <person name="Barry K."/>
            <person name="Detter J.C."/>
            <person name="Glavina T."/>
            <person name="Hammon N."/>
            <person name="Israni S."/>
            <person name="Pitluck S."/>
            <person name="Schmutz J."/>
            <person name="Larimer F."/>
            <person name="Land M."/>
            <person name="Kyrpides N."/>
            <person name="Lykidis A."/>
            <person name="Golden S."/>
            <person name="Richardson P."/>
        </authorList>
    </citation>
    <scope>NUCLEOTIDE SEQUENCE [LARGE SCALE GENOMIC DNA]</scope>
    <source>
        <strain>ATCC 33912 / PCC 7942 / FACHB-805</strain>
    </source>
</reference>
<sequence length="326" mass="35574">MFPTHRPRRLRSSETLRRMVRETTLTSADFIYPLFAVPGEGVAKEVTSMPGVYQLSIDKIVEEAKEVYDLGIPSIILFGIPTDKDNDATGAWHDCGIVQKAATAVKEAVPELIVAADTCLCEYTPHGHCGYLEVGDLSGRVLNDPTLELLRKTAVSQAKAGADIIAPSGMMDGFVATIRDALDEAGFSDTPIMAYSAKYASAYYGPFRDAAESTPQFGDRRTYQMDPGNSREALKEVELDVAEGADIVMVKPALSYMDIICRIKETTDLPVAAYNVSGEYSMVKAAALNGWIDEERVVLETLTSFKRAGADLILTYHAKDAARWLA</sequence>
<organism>
    <name type="scientific">Synechococcus elongatus (strain ATCC 33912 / PCC 7942 / FACHB-805)</name>
    <name type="common">Anacystis nidulans R2</name>
    <dbReference type="NCBI Taxonomy" id="1140"/>
    <lineage>
        <taxon>Bacteria</taxon>
        <taxon>Bacillati</taxon>
        <taxon>Cyanobacteriota</taxon>
        <taxon>Cyanophyceae</taxon>
        <taxon>Synechococcales</taxon>
        <taxon>Synechococcaceae</taxon>
        <taxon>Synechococcus</taxon>
    </lineage>
</organism>
<protein>
    <recommendedName>
        <fullName>Delta-aminolevulinic acid dehydratase</fullName>
        <shortName>ALAD</shortName>
        <shortName>ALADH</shortName>
        <ecNumber>4.2.1.24</ecNumber>
    </recommendedName>
    <alternativeName>
        <fullName>Porphobilinogen synthase</fullName>
    </alternativeName>
</protein>
<proteinExistence type="inferred from homology"/>
<comment type="function">
    <text evidence="1">Catalyzes an early step in the biosynthesis of tetrapyrroles. Binds two molecules of 5-aminolevulinate per subunit, each at a distinct site, and catalyzes their condensation to form porphobilinogen (By similarity).</text>
</comment>
<comment type="catalytic activity">
    <reaction>
        <text>2 5-aminolevulinate = porphobilinogen + 2 H2O + H(+)</text>
        <dbReference type="Rhea" id="RHEA:24064"/>
        <dbReference type="ChEBI" id="CHEBI:15377"/>
        <dbReference type="ChEBI" id="CHEBI:15378"/>
        <dbReference type="ChEBI" id="CHEBI:58126"/>
        <dbReference type="ChEBI" id="CHEBI:356416"/>
        <dbReference type="EC" id="4.2.1.24"/>
    </reaction>
</comment>
<comment type="cofactor">
    <cofactor evidence="1">
        <name>Zn(2+)</name>
        <dbReference type="ChEBI" id="CHEBI:29105"/>
    </cofactor>
    <text evidence="1">Binds 1 zinc ion per monomer.</text>
</comment>
<comment type="pathway">
    <text>Porphyrin-containing compound metabolism; protoporphyrin-IX biosynthesis; coproporphyrinogen-III from 5-aminolevulinate: step 1/4.</text>
</comment>
<comment type="subunit">
    <text evidence="1">Homooctamer.</text>
</comment>
<comment type="similarity">
    <text evidence="2">Belongs to the ALAD family.</text>
</comment>
<feature type="chain" id="PRO_0000140520" description="Delta-aminolevulinic acid dehydratase">
    <location>
        <begin position="1"/>
        <end position="326"/>
    </location>
</feature>
<feature type="active site" description="Schiff-base intermediate with substrate" evidence="1">
    <location>
        <position position="198"/>
    </location>
</feature>
<feature type="active site" description="Schiff-base intermediate with substrate" evidence="1">
    <location>
        <position position="251"/>
    </location>
</feature>
<feature type="binding site" evidence="1">
    <location>
        <position position="119"/>
    </location>
    <ligand>
        <name>Zn(2+)</name>
        <dbReference type="ChEBI" id="CHEBI:29105"/>
        <note>catalytic</note>
    </ligand>
</feature>
<feature type="binding site" evidence="1">
    <location>
        <position position="121"/>
    </location>
    <ligand>
        <name>Zn(2+)</name>
        <dbReference type="ChEBI" id="CHEBI:29105"/>
        <note>catalytic</note>
    </ligand>
</feature>
<feature type="binding site" evidence="1">
    <location>
        <position position="129"/>
    </location>
    <ligand>
        <name>Zn(2+)</name>
        <dbReference type="ChEBI" id="CHEBI:29105"/>
        <note>catalytic</note>
    </ligand>
</feature>
<feature type="binding site" evidence="1">
    <location>
        <position position="208"/>
    </location>
    <ligand>
        <name>5-aminolevulinate</name>
        <dbReference type="ChEBI" id="CHEBI:356416"/>
        <label>1</label>
    </ligand>
</feature>
<feature type="binding site" evidence="1">
    <location>
        <position position="220"/>
    </location>
    <ligand>
        <name>5-aminolevulinate</name>
        <dbReference type="ChEBI" id="CHEBI:356416"/>
        <label>1</label>
    </ligand>
</feature>
<feature type="binding site" evidence="1">
    <location>
        <position position="236"/>
    </location>
    <ligand>
        <name>Mg(2+)</name>
        <dbReference type="ChEBI" id="CHEBI:18420"/>
    </ligand>
</feature>
<feature type="binding site" evidence="1">
    <location>
        <position position="277"/>
    </location>
    <ligand>
        <name>5-aminolevulinate</name>
        <dbReference type="ChEBI" id="CHEBI:356416"/>
        <label>2</label>
    </ligand>
</feature>
<feature type="binding site" evidence="1">
    <location>
        <position position="316"/>
    </location>
    <ligand>
        <name>5-aminolevulinate</name>
        <dbReference type="ChEBI" id="CHEBI:356416"/>
        <label>2</label>
    </ligand>
</feature>
<feature type="sequence conflict" description="In Ref. 1; CAA49892." evidence="2" ref="1">
    <original>A</original>
    <variation>R</variation>
    <location>
        <position position="287"/>
    </location>
</feature>
<gene>
    <name type="primary">hemB</name>
    <name type="ordered locus">Synpcc7942_1792</name>
</gene>
<dbReference type="EC" id="4.2.1.24"/>
<dbReference type="EMBL" id="X70434">
    <property type="protein sequence ID" value="CAA49892.1"/>
    <property type="molecule type" value="Genomic_DNA"/>
</dbReference>
<dbReference type="EMBL" id="CP000100">
    <property type="protein sequence ID" value="ABB57822.1"/>
    <property type="molecule type" value="Genomic_DNA"/>
</dbReference>
<dbReference type="RefSeq" id="WP_011244611.1">
    <property type="nucleotide sequence ID" value="NZ_JACJTX010000001.1"/>
</dbReference>
<dbReference type="SMR" id="P43087"/>
<dbReference type="STRING" id="1140.Synpcc7942_1792"/>
<dbReference type="PaxDb" id="1140-Synpcc7942_1792"/>
<dbReference type="GeneID" id="72430663"/>
<dbReference type="KEGG" id="syf:Synpcc7942_1792"/>
<dbReference type="eggNOG" id="COG0113">
    <property type="taxonomic scope" value="Bacteria"/>
</dbReference>
<dbReference type="HOGENOM" id="CLU_035731_0_0_3"/>
<dbReference type="OrthoDB" id="9805001at2"/>
<dbReference type="BioCyc" id="SYNEL:SYNPCC7942_1792-MONOMER"/>
<dbReference type="UniPathway" id="UPA00251">
    <property type="reaction ID" value="UER00318"/>
</dbReference>
<dbReference type="Proteomes" id="UP000889800">
    <property type="component" value="Chromosome"/>
</dbReference>
<dbReference type="GO" id="GO:0005829">
    <property type="term" value="C:cytosol"/>
    <property type="evidence" value="ECO:0007669"/>
    <property type="project" value="TreeGrafter"/>
</dbReference>
<dbReference type="GO" id="GO:0004655">
    <property type="term" value="F:porphobilinogen synthase activity"/>
    <property type="evidence" value="ECO:0007669"/>
    <property type="project" value="UniProtKB-EC"/>
</dbReference>
<dbReference type="GO" id="GO:0008270">
    <property type="term" value="F:zinc ion binding"/>
    <property type="evidence" value="ECO:0007669"/>
    <property type="project" value="TreeGrafter"/>
</dbReference>
<dbReference type="GO" id="GO:0006782">
    <property type="term" value="P:protoporphyrinogen IX biosynthetic process"/>
    <property type="evidence" value="ECO:0007669"/>
    <property type="project" value="UniProtKB-UniPathway"/>
</dbReference>
<dbReference type="CDD" id="cd00384">
    <property type="entry name" value="ALAD_PBGS"/>
    <property type="match status" value="1"/>
</dbReference>
<dbReference type="FunFam" id="3.20.20.70:FF:000019">
    <property type="entry name" value="Delta-aminolevulinic acid dehydratase"/>
    <property type="match status" value="1"/>
</dbReference>
<dbReference type="Gene3D" id="3.20.20.70">
    <property type="entry name" value="Aldolase class I"/>
    <property type="match status" value="1"/>
</dbReference>
<dbReference type="InterPro" id="IPR001731">
    <property type="entry name" value="ALAD"/>
</dbReference>
<dbReference type="InterPro" id="IPR030656">
    <property type="entry name" value="ALAD_AS"/>
</dbReference>
<dbReference type="InterPro" id="IPR013785">
    <property type="entry name" value="Aldolase_TIM"/>
</dbReference>
<dbReference type="NCBIfam" id="NF006762">
    <property type="entry name" value="PRK09283.1"/>
    <property type="match status" value="1"/>
</dbReference>
<dbReference type="PANTHER" id="PTHR11458">
    <property type="entry name" value="DELTA-AMINOLEVULINIC ACID DEHYDRATASE"/>
    <property type="match status" value="1"/>
</dbReference>
<dbReference type="PANTHER" id="PTHR11458:SF0">
    <property type="entry name" value="DELTA-AMINOLEVULINIC ACID DEHYDRATASE"/>
    <property type="match status" value="1"/>
</dbReference>
<dbReference type="Pfam" id="PF00490">
    <property type="entry name" value="ALAD"/>
    <property type="match status" value="1"/>
</dbReference>
<dbReference type="PIRSF" id="PIRSF001415">
    <property type="entry name" value="Porphbilin_synth"/>
    <property type="match status" value="1"/>
</dbReference>
<dbReference type="PRINTS" id="PR00144">
    <property type="entry name" value="DALDHYDRTASE"/>
</dbReference>
<dbReference type="SMART" id="SM01004">
    <property type="entry name" value="ALAD"/>
    <property type="match status" value="1"/>
</dbReference>
<dbReference type="SUPFAM" id="SSF51569">
    <property type="entry name" value="Aldolase"/>
    <property type="match status" value="1"/>
</dbReference>
<dbReference type="PROSITE" id="PS00169">
    <property type="entry name" value="D_ALA_DEHYDRATASE"/>
    <property type="match status" value="1"/>
</dbReference>
<name>HEM2_SYNE7</name>